<comment type="function">
    <text evidence="1">NDH-1 shuttles electrons from NADH, via FMN and iron-sulfur (Fe-S) centers, to quinones in the respiratory chain. The immediate electron acceptor for the enzyme in this species is believed to be ubiquinone. Couples the redox reaction to proton translocation (for every two electrons transferred, four hydrogen ions are translocated across the cytoplasmic membrane), and thus conserves the redox energy in a proton gradient. This subunit may bind ubiquinone.</text>
</comment>
<comment type="catalytic activity">
    <reaction evidence="1">
        <text>a quinone + NADH + 5 H(+)(in) = a quinol + NAD(+) + 4 H(+)(out)</text>
        <dbReference type="Rhea" id="RHEA:57888"/>
        <dbReference type="ChEBI" id="CHEBI:15378"/>
        <dbReference type="ChEBI" id="CHEBI:24646"/>
        <dbReference type="ChEBI" id="CHEBI:57540"/>
        <dbReference type="ChEBI" id="CHEBI:57945"/>
        <dbReference type="ChEBI" id="CHEBI:132124"/>
    </reaction>
</comment>
<comment type="subunit">
    <text evidence="1">NDH-1 is composed of 14 different subunits. Subunits NuoA, H, J, K, L, M, N constitute the membrane sector of the complex.</text>
</comment>
<comment type="subcellular location">
    <subcellularLocation>
        <location evidence="1">Cell inner membrane</location>
        <topology evidence="1">Multi-pass membrane protein</topology>
    </subcellularLocation>
</comment>
<comment type="similarity">
    <text evidence="1">Belongs to the complex I subunit 1 family.</text>
</comment>
<protein>
    <recommendedName>
        <fullName evidence="1">NADH-quinone oxidoreductase subunit H 1</fullName>
        <ecNumber evidence="1">7.1.1.-</ecNumber>
    </recommendedName>
    <alternativeName>
        <fullName evidence="1">NADH dehydrogenase I subunit H 1</fullName>
    </alternativeName>
    <alternativeName>
        <fullName evidence="1">NDH-1 subunit H 1</fullName>
    </alternativeName>
</protein>
<feature type="chain" id="PRO_0000299947" description="NADH-quinone oxidoreductase subunit H 1">
    <location>
        <begin position="1"/>
        <end position="341"/>
    </location>
</feature>
<feature type="transmembrane region" description="Helical" evidence="1">
    <location>
        <begin position="7"/>
        <end position="27"/>
    </location>
</feature>
<feature type="transmembrane region" description="Helical" evidence="1">
    <location>
        <begin position="46"/>
        <end position="66"/>
    </location>
</feature>
<feature type="transmembrane region" description="Helical" evidence="1">
    <location>
        <begin position="80"/>
        <end position="100"/>
    </location>
</feature>
<feature type="transmembrane region" description="Helical" evidence="1">
    <location>
        <begin position="111"/>
        <end position="131"/>
    </location>
</feature>
<feature type="transmembrane region" description="Helical" evidence="1">
    <location>
        <begin position="157"/>
        <end position="177"/>
    </location>
</feature>
<feature type="transmembrane region" description="Helical" evidence="1">
    <location>
        <begin position="183"/>
        <end position="203"/>
    </location>
</feature>
<feature type="transmembrane region" description="Helical" evidence="1">
    <location>
        <begin position="244"/>
        <end position="264"/>
    </location>
</feature>
<feature type="transmembrane region" description="Helical" evidence="1">
    <location>
        <begin position="273"/>
        <end position="293"/>
    </location>
</feature>
<feature type="transmembrane region" description="Helical" evidence="1">
    <location>
        <begin position="305"/>
        <end position="325"/>
    </location>
</feature>
<evidence type="ECO:0000255" key="1">
    <source>
        <dbReference type="HAMAP-Rule" id="MF_01350"/>
    </source>
</evidence>
<sequence>MNSGMGIILTIAAQGLLVIAFVMISLLFLVYGDRKIWAAVQLRRGPNVVGAFGLLQTVADAAKYIFKEVVVPAGVDRPVFFLAPLISFVLAVLAWAVIPFSPGWVLSDINVAILFVFAASSLEVYGVIMGGWASNSKYPFLGSLRSAAQMISYEVSLGLIIIGIIISTGSMNLSHIVEAQDGAFGLFNWYWLPHLPMVALFFISALAETNRPPFDLPEAESELVAGFQVEYSSTPFLLFMAGEYIAIFLMCALMSLLFFGGWLSPIPGLPDGVFWMVAKMAFFFFLFAMVKAIVPRYRYDQLMRIGWKVFLPFSLGWVVLVAFLAKFEVFGGFWARWAMGG</sequence>
<reference key="1">
    <citation type="submission" date="2007-02" db="EMBL/GenBank/DDBJ databases">
        <title>Complete sequence of chromosome 1 of Rhodobacter sphaeroides ATCC 17029.</title>
        <authorList>
            <person name="Copeland A."/>
            <person name="Lucas S."/>
            <person name="Lapidus A."/>
            <person name="Barry K."/>
            <person name="Detter J.C."/>
            <person name="Glavina del Rio T."/>
            <person name="Hammon N."/>
            <person name="Israni S."/>
            <person name="Dalin E."/>
            <person name="Tice H."/>
            <person name="Pitluck S."/>
            <person name="Kiss H."/>
            <person name="Brettin T."/>
            <person name="Bruce D."/>
            <person name="Han C."/>
            <person name="Tapia R."/>
            <person name="Gilna P."/>
            <person name="Schmutz J."/>
            <person name="Larimer F."/>
            <person name="Land M."/>
            <person name="Hauser L."/>
            <person name="Kyrpides N."/>
            <person name="Mikhailova N."/>
            <person name="Richardson P."/>
            <person name="Mackenzie C."/>
            <person name="Choudhary M."/>
            <person name="Donohue T.J."/>
            <person name="Kaplan S."/>
        </authorList>
    </citation>
    <scope>NUCLEOTIDE SEQUENCE [LARGE SCALE GENOMIC DNA]</scope>
    <source>
        <strain>ATCC 17029 / ATH 2.4.9</strain>
    </source>
</reference>
<name>NUOH1_CERS1</name>
<organism>
    <name type="scientific">Cereibacter sphaeroides (strain ATCC 17029 / ATH 2.4.9)</name>
    <name type="common">Rhodobacter sphaeroides</name>
    <dbReference type="NCBI Taxonomy" id="349101"/>
    <lineage>
        <taxon>Bacteria</taxon>
        <taxon>Pseudomonadati</taxon>
        <taxon>Pseudomonadota</taxon>
        <taxon>Alphaproteobacteria</taxon>
        <taxon>Rhodobacterales</taxon>
        <taxon>Paracoccaceae</taxon>
        <taxon>Cereibacter</taxon>
    </lineage>
</organism>
<dbReference type="EC" id="7.1.1.-" evidence="1"/>
<dbReference type="EMBL" id="CP000577">
    <property type="protein sequence ID" value="ABN76294.1"/>
    <property type="molecule type" value="Genomic_DNA"/>
</dbReference>
<dbReference type="SMR" id="A3PIX8"/>
<dbReference type="KEGG" id="rsh:Rsph17029_1184"/>
<dbReference type="HOGENOM" id="CLU_015134_0_1_5"/>
<dbReference type="GO" id="GO:0005886">
    <property type="term" value="C:plasma membrane"/>
    <property type="evidence" value="ECO:0007669"/>
    <property type="project" value="UniProtKB-SubCell"/>
</dbReference>
<dbReference type="GO" id="GO:0003954">
    <property type="term" value="F:NADH dehydrogenase activity"/>
    <property type="evidence" value="ECO:0007669"/>
    <property type="project" value="TreeGrafter"/>
</dbReference>
<dbReference type="GO" id="GO:0016655">
    <property type="term" value="F:oxidoreductase activity, acting on NAD(P)H, quinone or similar compound as acceptor"/>
    <property type="evidence" value="ECO:0007669"/>
    <property type="project" value="UniProtKB-UniRule"/>
</dbReference>
<dbReference type="GO" id="GO:0048038">
    <property type="term" value="F:quinone binding"/>
    <property type="evidence" value="ECO:0007669"/>
    <property type="project" value="UniProtKB-KW"/>
</dbReference>
<dbReference type="GO" id="GO:0009060">
    <property type="term" value="P:aerobic respiration"/>
    <property type="evidence" value="ECO:0007669"/>
    <property type="project" value="TreeGrafter"/>
</dbReference>
<dbReference type="HAMAP" id="MF_01350">
    <property type="entry name" value="NDH1_NuoH"/>
    <property type="match status" value="1"/>
</dbReference>
<dbReference type="InterPro" id="IPR001694">
    <property type="entry name" value="NADH_UbQ_OxRdtase_su1/FPO"/>
</dbReference>
<dbReference type="InterPro" id="IPR018086">
    <property type="entry name" value="NADH_UbQ_OxRdtase_su1_CS"/>
</dbReference>
<dbReference type="NCBIfam" id="NF004741">
    <property type="entry name" value="PRK06076.1-2"/>
    <property type="match status" value="1"/>
</dbReference>
<dbReference type="NCBIfam" id="NF004745">
    <property type="entry name" value="PRK06076.1-6"/>
    <property type="match status" value="1"/>
</dbReference>
<dbReference type="PANTHER" id="PTHR11432">
    <property type="entry name" value="NADH DEHYDROGENASE SUBUNIT 1"/>
    <property type="match status" value="1"/>
</dbReference>
<dbReference type="PANTHER" id="PTHR11432:SF3">
    <property type="entry name" value="NADH-UBIQUINONE OXIDOREDUCTASE CHAIN 1"/>
    <property type="match status" value="1"/>
</dbReference>
<dbReference type="Pfam" id="PF00146">
    <property type="entry name" value="NADHdh"/>
    <property type="match status" value="1"/>
</dbReference>
<dbReference type="PROSITE" id="PS00667">
    <property type="entry name" value="COMPLEX1_ND1_1"/>
    <property type="match status" value="1"/>
</dbReference>
<dbReference type="PROSITE" id="PS00668">
    <property type="entry name" value="COMPLEX1_ND1_2"/>
    <property type="match status" value="1"/>
</dbReference>
<keyword id="KW-0997">Cell inner membrane</keyword>
<keyword id="KW-1003">Cell membrane</keyword>
<keyword id="KW-0472">Membrane</keyword>
<keyword id="KW-0520">NAD</keyword>
<keyword id="KW-0874">Quinone</keyword>
<keyword id="KW-1278">Translocase</keyword>
<keyword id="KW-0812">Transmembrane</keyword>
<keyword id="KW-1133">Transmembrane helix</keyword>
<keyword id="KW-0830">Ubiquinone</keyword>
<accession>A3PIX8</accession>
<proteinExistence type="inferred from homology"/>
<gene>
    <name evidence="1" type="primary">nuoH1</name>
    <name type="ordered locus">Rsph17029_1184</name>
</gene>